<sequence>MGKTKDIGDDDTVASEFWSGALSQPSSVPTRPRTPNRDSWRRAWAARGLHPRPSILQPGPARLSRARAGGTRCPQRRHGRATFCALGRGIGVRRGPGPRPARIPGLTLTWKRMSARRMQWAMQTGGRNQTFGGGVPLFWTWLTICCAVWRSLPCRLTHSCSRAFSSAPLKKTKSSMLPPKQALASAARNLCRGAGCNRQAVAGQLLPSTWSLHAHGLAKEAPILPVKKISRSCSVNNKVSKKTTKPPTLRSFLSPI</sequence>
<proteinExistence type="evidence at protein level"/>
<keyword id="KW-1185">Reference proteome</keyword>
<accession>Q5T036</accession>
<accession>A6NN20</accession>
<reference key="1">
    <citation type="journal article" date="2004" name="Nat. Genet.">
        <title>Complete sequencing and characterization of 21,243 full-length human cDNAs.</title>
        <authorList>
            <person name="Ota T."/>
            <person name="Suzuki Y."/>
            <person name="Nishikawa T."/>
            <person name="Otsuki T."/>
            <person name="Sugiyama T."/>
            <person name="Irie R."/>
            <person name="Wakamatsu A."/>
            <person name="Hayashi K."/>
            <person name="Sato H."/>
            <person name="Nagai K."/>
            <person name="Kimura K."/>
            <person name="Makita H."/>
            <person name="Sekine M."/>
            <person name="Obayashi M."/>
            <person name="Nishi T."/>
            <person name="Shibahara T."/>
            <person name="Tanaka T."/>
            <person name="Ishii S."/>
            <person name="Yamamoto J."/>
            <person name="Saito K."/>
            <person name="Kawai Y."/>
            <person name="Isono Y."/>
            <person name="Nakamura Y."/>
            <person name="Nagahari K."/>
            <person name="Murakami K."/>
            <person name="Yasuda T."/>
            <person name="Iwayanagi T."/>
            <person name="Wagatsuma M."/>
            <person name="Shiratori A."/>
            <person name="Sudo H."/>
            <person name="Hosoiri T."/>
            <person name="Kaku Y."/>
            <person name="Kodaira H."/>
            <person name="Kondo H."/>
            <person name="Sugawara M."/>
            <person name="Takahashi M."/>
            <person name="Kanda K."/>
            <person name="Yokoi T."/>
            <person name="Furuya T."/>
            <person name="Kikkawa E."/>
            <person name="Omura Y."/>
            <person name="Abe K."/>
            <person name="Kamihara K."/>
            <person name="Katsuta N."/>
            <person name="Sato K."/>
            <person name="Tanikawa M."/>
            <person name="Yamazaki M."/>
            <person name="Ninomiya K."/>
            <person name="Ishibashi T."/>
            <person name="Yamashita H."/>
            <person name="Murakawa K."/>
            <person name="Fujimori K."/>
            <person name="Tanai H."/>
            <person name="Kimata M."/>
            <person name="Watanabe M."/>
            <person name="Hiraoka S."/>
            <person name="Chiba Y."/>
            <person name="Ishida S."/>
            <person name="Ono Y."/>
            <person name="Takiguchi S."/>
            <person name="Watanabe S."/>
            <person name="Yosida M."/>
            <person name="Hotuta T."/>
            <person name="Kusano J."/>
            <person name="Kanehori K."/>
            <person name="Takahashi-Fujii A."/>
            <person name="Hara H."/>
            <person name="Tanase T.-O."/>
            <person name="Nomura Y."/>
            <person name="Togiya S."/>
            <person name="Komai F."/>
            <person name="Hara R."/>
            <person name="Takeuchi K."/>
            <person name="Arita M."/>
            <person name="Imose N."/>
            <person name="Musashino K."/>
            <person name="Yuuki H."/>
            <person name="Oshima A."/>
            <person name="Sasaki N."/>
            <person name="Aotsuka S."/>
            <person name="Yoshikawa Y."/>
            <person name="Matsunawa H."/>
            <person name="Ichihara T."/>
            <person name="Shiohata N."/>
            <person name="Sano S."/>
            <person name="Moriya S."/>
            <person name="Momiyama H."/>
            <person name="Satoh N."/>
            <person name="Takami S."/>
            <person name="Terashima Y."/>
            <person name="Suzuki O."/>
            <person name="Nakagawa S."/>
            <person name="Senoh A."/>
            <person name="Mizoguchi H."/>
            <person name="Goto Y."/>
            <person name="Shimizu F."/>
            <person name="Wakebe H."/>
            <person name="Hishigaki H."/>
            <person name="Watanabe T."/>
            <person name="Sugiyama A."/>
            <person name="Takemoto M."/>
            <person name="Kawakami B."/>
            <person name="Yamazaki M."/>
            <person name="Watanabe K."/>
            <person name="Kumagai A."/>
            <person name="Itakura S."/>
            <person name="Fukuzumi Y."/>
            <person name="Fujimori Y."/>
            <person name="Komiyama M."/>
            <person name="Tashiro H."/>
            <person name="Tanigami A."/>
            <person name="Fujiwara T."/>
            <person name="Ono T."/>
            <person name="Yamada K."/>
            <person name="Fujii Y."/>
            <person name="Ozaki K."/>
            <person name="Hirao M."/>
            <person name="Ohmori Y."/>
            <person name="Kawabata A."/>
            <person name="Hikiji T."/>
            <person name="Kobatake N."/>
            <person name="Inagaki H."/>
            <person name="Ikema Y."/>
            <person name="Okamoto S."/>
            <person name="Okitani R."/>
            <person name="Kawakami T."/>
            <person name="Noguchi S."/>
            <person name="Itoh T."/>
            <person name="Shigeta K."/>
            <person name="Senba T."/>
            <person name="Matsumura K."/>
            <person name="Nakajima Y."/>
            <person name="Mizuno T."/>
            <person name="Morinaga M."/>
            <person name="Sasaki M."/>
            <person name="Togashi T."/>
            <person name="Oyama M."/>
            <person name="Hata H."/>
            <person name="Watanabe M."/>
            <person name="Komatsu T."/>
            <person name="Mizushima-Sugano J."/>
            <person name="Satoh T."/>
            <person name="Shirai Y."/>
            <person name="Takahashi Y."/>
            <person name="Nakagawa K."/>
            <person name="Okumura K."/>
            <person name="Nagase T."/>
            <person name="Nomura N."/>
            <person name="Kikuchi H."/>
            <person name="Masuho Y."/>
            <person name="Yamashita R."/>
            <person name="Nakai K."/>
            <person name="Yada T."/>
            <person name="Nakamura Y."/>
            <person name="Ohara O."/>
            <person name="Isogai T."/>
            <person name="Sugano S."/>
        </authorList>
    </citation>
    <scope>NUCLEOTIDE SEQUENCE [LARGE SCALE MRNA]</scope>
    <scope>VARIANTS PHE-22 AND GLU-241</scope>
</reference>
<reference key="2">
    <citation type="journal article" date="2004" name="Nature">
        <title>DNA sequence and analysis of human chromosome 9.</title>
        <authorList>
            <person name="Humphray S.J."/>
            <person name="Oliver K."/>
            <person name="Hunt A.R."/>
            <person name="Plumb R.W."/>
            <person name="Loveland J.E."/>
            <person name="Howe K.L."/>
            <person name="Andrews T.D."/>
            <person name="Searle S."/>
            <person name="Hunt S.E."/>
            <person name="Scott C.E."/>
            <person name="Jones M.C."/>
            <person name="Ainscough R."/>
            <person name="Almeida J.P."/>
            <person name="Ambrose K.D."/>
            <person name="Ashwell R.I.S."/>
            <person name="Babbage A.K."/>
            <person name="Babbage S."/>
            <person name="Bagguley C.L."/>
            <person name="Bailey J."/>
            <person name="Banerjee R."/>
            <person name="Barker D.J."/>
            <person name="Barlow K.F."/>
            <person name="Bates K."/>
            <person name="Beasley H."/>
            <person name="Beasley O."/>
            <person name="Bird C.P."/>
            <person name="Bray-Allen S."/>
            <person name="Brown A.J."/>
            <person name="Brown J.Y."/>
            <person name="Burford D."/>
            <person name="Burrill W."/>
            <person name="Burton J."/>
            <person name="Carder C."/>
            <person name="Carter N.P."/>
            <person name="Chapman J.C."/>
            <person name="Chen Y."/>
            <person name="Clarke G."/>
            <person name="Clark S.Y."/>
            <person name="Clee C.M."/>
            <person name="Clegg S."/>
            <person name="Collier R.E."/>
            <person name="Corby N."/>
            <person name="Crosier M."/>
            <person name="Cummings A.T."/>
            <person name="Davies J."/>
            <person name="Dhami P."/>
            <person name="Dunn M."/>
            <person name="Dutta I."/>
            <person name="Dyer L.W."/>
            <person name="Earthrowl M.E."/>
            <person name="Faulkner L."/>
            <person name="Fleming C.J."/>
            <person name="Frankish A."/>
            <person name="Frankland J.A."/>
            <person name="French L."/>
            <person name="Fricker D.G."/>
            <person name="Garner P."/>
            <person name="Garnett J."/>
            <person name="Ghori J."/>
            <person name="Gilbert J.G.R."/>
            <person name="Glison C."/>
            <person name="Grafham D.V."/>
            <person name="Gribble S."/>
            <person name="Griffiths C."/>
            <person name="Griffiths-Jones S."/>
            <person name="Grocock R."/>
            <person name="Guy J."/>
            <person name="Hall R.E."/>
            <person name="Hammond S."/>
            <person name="Harley J.L."/>
            <person name="Harrison E.S.I."/>
            <person name="Hart E.A."/>
            <person name="Heath P.D."/>
            <person name="Henderson C.D."/>
            <person name="Hopkins B.L."/>
            <person name="Howard P.J."/>
            <person name="Howden P.J."/>
            <person name="Huckle E."/>
            <person name="Johnson C."/>
            <person name="Johnson D."/>
            <person name="Joy A.A."/>
            <person name="Kay M."/>
            <person name="Keenan S."/>
            <person name="Kershaw J.K."/>
            <person name="Kimberley A.M."/>
            <person name="King A."/>
            <person name="Knights A."/>
            <person name="Laird G.K."/>
            <person name="Langford C."/>
            <person name="Lawlor S."/>
            <person name="Leongamornlert D.A."/>
            <person name="Leversha M."/>
            <person name="Lloyd C."/>
            <person name="Lloyd D.M."/>
            <person name="Lovell J."/>
            <person name="Martin S."/>
            <person name="Mashreghi-Mohammadi M."/>
            <person name="Matthews L."/>
            <person name="McLaren S."/>
            <person name="McLay K.E."/>
            <person name="McMurray A."/>
            <person name="Milne S."/>
            <person name="Nickerson T."/>
            <person name="Nisbett J."/>
            <person name="Nordsiek G."/>
            <person name="Pearce A.V."/>
            <person name="Peck A.I."/>
            <person name="Porter K.M."/>
            <person name="Pandian R."/>
            <person name="Pelan S."/>
            <person name="Phillimore B."/>
            <person name="Povey S."/>
            <person name="Ramsey Y."/>
            <person name="Rand V."/>
            <person name="Scharfe M."/>
            <person name="Sehra H.K."/>
            <person name="Shownkeen R."/>
            <person name="Sims S.K."/>
            <person name="Skuce C.D."/>
            <person name="Smith M."/>
            <person name="Steward C.A."/>
            <person name="Swarbreck D."/>
            <person name="Sycamore N."/>
            <person name="Tester J."/>
            <person name="Thorpe A."/>
            <person name="Tracey A."/>
            <person name="Tromans A."/>
            <person name="Thomas D.W."/>
            <person name="Wall M."/>
            <person name="Wallis J.M."/>
            <person name="West A.P."/>
            <person name="Whitehead S.L."/>
            <person name="Willey D.L."/>
            <person name="Williams S.A."/>
            <person name="Wilming L."/>
            <person name="Wray P.W."/>
            <person name="Young L."/>
            <person name="Ashurst J.L."/>
            <person name="Coulson A."/>
            <person name="Blocker H."/>
            <person name="Durbin R.M."/>
            <person name="Sulston J.E."/>
            <person name="Hubbard T."/>
            <person name="Jackson M.J."/>
            <person name="Bentley D.R."/>
            <person name="Beck S."/>
            <person name="Rogers J."/>
            <person name="Dunham I."/>
        </authorList>
    </citation>
    <scope>NUCLEOTIDE SEQUENCE [LARGE SCALE GENOMIC DNA]</scope>
</reference>
<dbReference type="EMBL" id="AK056096">
    <property type="status" value="NOT_ANNOTATED_CDS"/>
    <property type="molecule type" value="mRNA"/>
</dbReference>
<dbReference type="EMBL" id="AL583839">
    <property type="status" value="NOT_ANNOTATED_CDS"/>
    <property type="molecule type" value="Genomic_DNA"/>
</dbReference>
<dbReference type="EMBL" id="AL353629">
    <property type="status" value="NOT_ANNOTATED_CDS"/>
    <property type="molecule type" value="Genomic_DNA"/>
</dbReference>
<dbReference type="CCDS" id="CCDS6705.1"/>
<dbReference type="RefSeq" id="NP_942138.2">
    <property type="nucleotide sequence ID" value="NM_198841.4"/>
</dbReference>
<dbReference type="BioGRID" id="127664">
    <property type="interactions" value="24"/>
</dbReference>
<dbReference type="FunCoup" id="Q5T036">
    <property type="interactions" value="5"/>
</dbReference>
<dbReference type="IntAct" id="Q5T036">
    <property type="interactions" value="15"/>
</dbReference>
<dbReference type="STRING" id="9606.ENSP00000364561"/>
<dbReference type="GlyGen" id="Q5T036">
    <property type="glycosylation" value="1 site, 1 O-linked glycan (1 site)"/>
</dbReference>
<dbReference type="iPTMnet" id="Q5T036"/>
<dbReference type="PhosphoSitePlus" id="Q5T036"/>
<dbReference type="BioMuta" id="FAM120AOS"/>
<dbReference type="jPOST" id="Q5T036"/>
<dbReference type="MassIVE" id="Q5T036"/>
<dbReference type="PaxDb" id="9606-ENSP00000364561"/>
<dbReference type="PeptideAtlas" id="Q5T036"/>
<dbReference type="ProteomicsDB" id="64123"/>
<dbReference type="Antibodypedia" id="54979">
    <property type="antibodies" value="6 antibodies from 6 providers"/>
</dbReference>
<dbReference type="DNASU" id="158293"/>
<dbReference type="Ensembl" id="ENST00000375412.11">
    <property type="protein sequence ID" value="ENSP00000364561.5"/>
    <property type="gene ID" value="ENSG00000188938.17"/>
</dbReference>
<dbReference type="GeneID" id="158293"/>
<dbReference type="KEGG" id="hsa:158293"/>
<dbReference type="MANE-Select" id="ENST00000375412.11">
    <property type="protein sequence ID" value="ENSP00000364561.5"/>
    <property type="RefSeq nucleotide sequence ID" value="NM_198841.4"/>
    <property type="RefSeq protein sequence ID" value="NP_942138.2"/>
</dbReference>
<dbReference type="UCSC" id="uc004atu.5">
    <property type="organism name" value="human"/>
</dbReference>
<dbReference type="AGR" id="HGNC:23389"/>
<dbReference type="CTD" id="158293"/>
<dbReference type="DisGeNET" id="158293"/>
<dbReference type="GeneCards" id="FAM120AOS"/>
<dbReference type="HGNC" id="HGNC:23389">
    <property type="gene designation" value="FAM120AOS"/>
</dbReference>
<dbReference type="HPA" id="ENSG00000188938">
    <property type="expression patterns" value="Low tissue specificity"/>
</dbReference>
<dbReference type="MalaCards" id="FAM120AOS"/>
<dbReference type="neXtProt" id="NX_Q5T036"/>
<dbReference type="OpenTargets" id="ENSG00000188938"/>
<dbReference type="PharmGKB" id="PA134893278"/>
<dbReference type="VEuPathDB" id="HostDB:ENSG00000188938"/>
<dbReference type="eggNOG" id="ENOG502TEJ0">
    <property type="taxonomic scope" value="Eukaryota"/>
</dbReference>
<dbReference type="GeneTree" id="ENSGT00390000001747"/>
<dbReference type="HOGENOM" id="CLU_1111099_0_0_1"/>
<dbReference type="InParanoid" id="Q5T036"/>
<dbReference type="OMA" id="GTRCPQR"/>
<dbReference type="OrthoDB" id="9514598at2759"/>
<dbReference type="PAN-GO" id="Q5T036">
    <property type="GO annotations" value="0 GO annotations based on evolutionary models"/>
</dbReference>
<dbReference type="PhylomeDB" id="Q5T036"/>
<dbReference type="TreeFam" id="TF338583"/>
<dbReference type="PathwayCommons" id="Q5T036"/>
<dbReference type="SignaLink" id="Q5T036"/>
<dbReference type="BioGRID-ORCS" id="158293">
    <property type="hits" value="11 hits in 1152 CRISPR screens"/>
</dbReference>
<dbReference type="ChiTaRS" id="FAM120AOS">
    <property type="organism name" value="human"/>
</dbReference>
<dbReference type="GenomeRNAi" id="158293"/>
<dbReference type="Pharos" id="Q5T036">
    <property type="development level" value="Tdark"/>
</dbReference>
<dbReference type="PRO" id="PR:Q5T036"/>
<dbReference type="Proteomes" id="UP000005640">
    <property type="component" value="Chromosome 9"/>
</dbReference>
<dbReference type="RNAct" id="Q5T036">
    <property type="molecule type" value="protein"/>
</dbReference>
<dbReference type="Bgee" id="ENSG00000188938">
    <property type="expression patterns" value="Expressed in cardiac muscle of right atrium and 191 other cell types or tissues"/>
</dbReference>
<dbReference type="ExpressionAtlas" id="Q5T036">
    <property type="expression patterns" value="baseline and differential"/>
</dbReference>
<feature type="chain" id="PRO_0000337248" description="Uncharacterized protein FAM120AOS">
    <location>
        <begin position="1"/>
        <end position="256"/>
    </location>
</feature>
<feature type="region of interest" description="Disordered" evidence="1">
    <location>
        <begin position="1"/>
        <end position="38"/>
    </location>
</feature>
<feature type="region of interest" description="Disordered" evidence="1">
    <location>
        <begin position="51"/>
        <end position="75"/>
    </location>
</feature>
<feature type="sequence variant" id="VAR_043677" description="In dbSNP:rs1055710." evidence="2">
    <original>L</original>
    <variation>F</variation>
    <location>
        <position position="22"/>
    </location>
</feature>
<feature type="sequence variant" id="VAR_043678" description="In dbSNP:rs10821128." evidence="2">
    <original>K</original>
    <variation>E</variation>
    <location>
        <position position="241"/>
    </location>
</feature>
<gene>
    <name type="primary">FAM120AOS</name>
    <name type="synonym">C9orf10OS</name>
</gene>
<evidence type="ECO:0000256" key="1">
    <source>
        <dbReference type="SAM" id="MobiDB-lite"/>
    </source>
</evidence>
<evidence type="ECO:0000269" key="2">
    <source>
    </source>
</evidence>
<evidence type="ECO:0000305" key="3"/>
<protein>
    <recommendedName>
        <fullName evidence="3">Uncharacterized protein FAM120AOS</fullName>
    </recommendedName>
    <alternativeName>
        <fullName evidence="3">FAM120A opposite strand protein</fullName>
    </alternativeName>
</protein>
<name>F120S_HUMAN</name>
<comment type="interaction">
    <interactant intactId="EBI-12420808">
        <id>Q5T036</id>
    </interactant>
    <interactant intactId="EBI-724076">
        <id>Q99750</id>
        <label>MDFI</label>
    </interactant>
    <organismsDiffer>false</organismsDiffer>
    <experiments>3</experiments>
</comment>
<organism>
    <name type="scientific">Homo sapiens</name>
    <name type="common">Human</name>
    <dbReference type="NCBI Taxonomy" id="9606"/>
    <lineage>
        <taxon>Eukaryota</taxon>
        <taxon>Metazoa</taxon>
        <taxon>Chordata</taxon>
        <taxon>Craniata</taxon>
        <taxon>Vertebrata</taxon>
        <taxon>Euteleostomi</taxon>
        <taxon>Mammalia</taxon>
        <taxon>Eutheria</taxon>
        <taxon>Euarchontoglires</taxon>
        <taxon>Primates</taxon>
        <taxon>Haplorrhini</taxon>
        <taxon>Catarrhini</taxon>
        <taxon>Hominidae</taxon>
        <taxon>Homo</taxon>
    </lineage>
</organism>